<sequence>MKTFTAKPETVKRDWYVVDATGKTLGRLATELARRLRGKHKAEYTPHVDTGDYIIVLNADKVAVTGNKRTDKVYYHHTGHIGGIKQATFEEMIARRPERVIEIAVKGMLPKGPLGRAMFRKLKVYAGNEHNHAAQQPQVLDI</sequence>
<keyword id="KW-1185">Reference proteome</keyword>
<keyword id="KW-0687">Ribonucleoprotein</keyword>
<keyword id="KW-0689">Ribosomal protein</keyword>
<organism>
    <name type="scientific">Escherichia coli (strain 55989 / EAEC)</name>
    <dbReference type="NCBI Taxonomy" id="585055"/>
    <lineage>
        <taxon>Bacteria</taxon>
        <taxon>Pseudomonadati</taxon>
        <taxon>Pseudomonadota</taxon>
        <taxon>Gammaproteobacteria</taxon>
        <taxon>Enterobacterales</taxon>
        <taxon>Enterobacteriaceae</taxon>
        <taxon>Escherichia</taxon>
    </lineage>
</organism>
<comment type="function">
    <text evidence="1">This protein is one of the early assembly proteins of the 50S ribosomal subunit, although it is not seen to bind rRNA by itself. It is important during the early stages of 50S assembly.</text>
</comment>
<comment type="subunit">
    <text evidence="1">Part of the 50S ribosomal subunit.</text>
</comment>
<comment type="similarity">
    <text evidence="1">Belongs to the universal ribosomal protein uL13 family.</text>
</comment>
<protein>
    <recommendedName>
        <fullName evidence="1">Large ribosomal subunit protein uL13</fullName>
    </recommendedName>
    <alternativeName>
        <fullName evidence="2">50S ribosomal protein L13</fullName>
    </alternativeName>
</protein>
<reference key="1">
    <citation type="journal article" date="2009" name="PLoS Genet.">
        <title>Organised genome dynamics in the Escherichia coli species results in highly diverse adaptive paths.</title>
        <authorList>
            <person name="Touchon M."/>
            <person name="Hoede C."/>
            <person name="Tenaillon O."/>
            <person name="Barbe V."/>
            <person name="Baeriswyl S."/>
            <person name="Bidet P."/>
            <person name="Bingen E."/>
            <person name="Bonacorsi S."/>
            <person name="Bouchier C."/>
            <person name="Bouvet O."/>
            <person name="Calteau A."/>
            <person name="Chiapello H."/>
            <person name="Clermont O."/>
            <person name="Cruveiller S."/>
            <person name="Danchin A."/>
            <person name="Diard M."/>
            <person name="Dossat C."/>
            <person name="Karoui M.E."/>
            <person name="Frapy E."/>
            <person name="Garry L."/>
            <person name="Ghigo J.M."/>
            <person name="Gilles A.M."/>
            <person name="Johnson J."/>
            <person name="Le Bouguenec C."/>
            <person name="Lescat M."/>
            <person name="Mangenot S."/>
            <person name="Martinez-Jehanne V."/>
            <person name="Matic I."/>
            <person name="Nassif X."/>
            <person name="Oztas S."/>
            <person name="Petit M.A."/>
            <person name="Pichon C."/>
            <person name="Rouy Z."/>
            <person name="Ruf C.S."/>
            <person name="Schneider D."/>
            <person name="Tourret J."/>
            <person name="Vacherie B."/>
            <person name="Vallenet D."/>
            <person name="Medigue C."/>
            <person name="Rocha E.P.C."/>
            <person name="Denamur E."/>
        </authorList>
    </citation>
    <scope>NUCLEOTIDE SEQUENCE [LARGE SCALE GENOMIC DNA]</scope>
    <source>
        <strain>55989 / EAEC</strain>
    </source>
</reference>
<name>RL13_ECO55</name>
<accession>B7LHT9</accession>
<dbReference type="EMBL" id="CU928145">
    <property type="protein sequence ID" value="CAU99894.1"/>
    <property type="molecule type" value="Genomic_DNA"/>
</dbReference>
<dbReference type="RefSeq" id="WP_000847559.1">
    <property type="nucleotide sequence ID" value="NZ_CP028304.1"/>
</dbReference>
<dbReference type="SMR" id="B7LHT9"/>
<dbReference type="GeneID" id="89518067"/>
<dbReference type="KEGG" id="eck:EC55989_3644"/>
<dbReference type="HOGENOM" id="CLU_082184_2_2_6"/>
<dbReference type="Proteomes" id="UP000000746">
    <property type="component" value="Chromosome"/>
</dbReference>
<dbReference type="GO" id="GO:0022625">
    <property type="term" value="C:cytosolic large ribosomal subunit"/>
    <property type="evidence" value="ECO:0007669"/>
    <property type="project" value="TreeGrafter"/>
</dbReference>
<dbReference type="GO" id="GO:0003729">
    <property type="term" value="F:mRNA binding"/>
    <property type="evidence" value="ECO:0007669"/>
    <property type="project" value="TreeGrafter"/>
</dbReference>
<dbReference type="GO" id="GO:0003735">
    <property type="term" value="F:structural constituent of ribosome"/>
    <property type="evidence" value="ECO:0007669"/>
    <property type="project" value="InterPro"/>
</dbReference>
<dbReference type="GO" id="GO:0017148">
    <property type="term" value="P:negative regulation of translation"/>
    <property type="evidence" value="ECO:0007669"/>
    <property type="project" value="TreeGrafter"/>
</dbReference>
<dbReference type="GO" id="GO:0006412">
    <property type="term" value="P:translation"/>
    <property type="evidence" value="ECO:0007669"/>
    <property type="project" value="UniProtKB-UniRule"/>
</dbReference>
<dbReference type="CDD" id="cd00392">
    <property type="entry name" value="Ribosomal_L13"/>
    <property type="match status" value="1"/>
</dbReference>
<dbReference type="FunFam" id="3.90.1180.10:FF:000001">
    <property type="entry name" value="50S ribosomal protein L13"/>
    <property type="match status" value="1"/>
</dbReference>
<dbReference type="Gene3D" id="3.90.1180.10">
    <property type="entry name" value="Ribosomal protein L13"/>
    <property type="match status" value="1"/>
</dbReference>
<dbReference type="HAMAP" id="MF_01366">
    <property type="entry name" value="Ribosomal_uL13"/>
    <property type="match status" value="1"/>
</dbReference>
<dbReference type="InterPro" id="IPR005822">
    <property type="entry name" value="Ribosomal_uL13"/>
</dbReference>
<dbReference type="InterPro" id="IPR005823">
    <property type="entry name" value="Ribosomal_uL13_bac-type"/>
</dbReference>
<dbReference type="InterPro" id="IPR023563">
    <property type="entry name" value="Ribosomal_uL13_CS"/>
</dbReference>
<dbReference type="InterPro" id="IPR036899">
    <property type="entry name" value="Ribosomal_uL13_sf"/>
</dbReference>
<dbReference type="NCBIfam" id="TIGR01066">
    <property type="entry name" value="rplM_bact"/>
    <property type="match status" value="1"/>
</dbReference>
<dbReference type="PANTHER" id="PTHR11545:SF2">
    <property type="entry name" value="LARGE RIBOSOMAL SUBUNIT PROTEIN UL13M"/>
    <property type="match status" value="1"/>
</dbReference>
<dbReference type="PANTHER" id="PTHR11545">
    <property type="entry name" value="RIBOSOMAL PROTEIN L13"/>
    <property type="match status" value="1"/>
</dbReference>
<dbReference type="Pfam" id="PF00572">
    <property type="entry name" value="Ribosomal_L13"/>
    <property type="match status" value="1"/>
</dbReference>
<dbReference type="PIRSF" id="PIRSF002181">
    <property type="entry name" value="Ribosomal_L13"/>
    <property type="match status" value="1"/>
</dbReference>
<dbReference type="SUPFAM" id="SSF52161">
    <property type="entry name" value="Ribosomal protein L13"/>
    <property type="match status" value="1"/>
</dbReference>
<dbReference type="PROSITE" id="PS00783">
    <property type="entry name" value="RIBOSOMAL_L13"/>
    <property type="match status" value="1"/>
</dbReference>
<gene>
    <name evidence="1" type="primary">rplM</name>
    <name type="ordered locus">EC55989_3644</name>
</gene>
<evidence type="ECO:0000255" key="1">
    <source>
        <dbReference type="HAMAP-Rule" id="MF_01366"/>
    </source>
</evidence>
<evidence type="ECO:0000305" key="2"/>
<proteinExistence type="inferred from homology"/>
<feature type="chain" id="PRO_1000166868" description="Large ribosomal subunit protein uL13">
    <location>
        <begin position="1"/>
        <end position="142"/>
    </location>
</feature>